<proteinExistence type="inferred from homology"/>
<sequence>MNKIVHKVAEAFRKNGVPRTKWLNPKTIYGLANQKLLGSVEAPHAQGTGLNTVPQVEHYTKACRTKQRDMVRSYLEATGSTHFARLNTPAYNKSSALEFYAKLKALQRYTEGEEVLFQMSSVEVREIISRLVKLTQEGDQIPDEQRRFPTELFMDVAPVPNFNDDPGILEQYIGILTHSAFYYHNTSKIDPIPHILRDLLHPQNEKTASLRTTTMFNDLIYYFGKKSDYASCREYYSQMKLEKKTPNIETYRLLFLNLLKNMQIPKKQLPYKEMIFYLNDMEKFGVPADAKIWAYCYHLLVESVSKKLLLEKMIQHNAPISPDFIVSILRTLDVDCKAILEFAKEYSIPFTPKLLRLCISKLCKEYKFESAWQLLTSLCRSTDVVTTGSVNILLNAAAEKGRLDLAVLTYNSMKVQLGVTPDLRTHRLIFKAMARNGYHENFQDVYHWAVWSMKRSTSGWFVHDAWSRRCESMIKQKCGSVTPPTTENMEKVAAILHRGVWDNRGLFIRCWGEYKELRHVFRLLGSIPPAYKGKTA</sequence>
<dbReference type="EMBL" id="AE016820">
    <property type="protein sequence ID" value="AAS54483.1"/>
    <property type="molecule type" value="Genomic_DNA"/>
</dbReference>
<dbReference type="RefSeq" id="NP_986659.1">
    <property type="nucleotide sequence ID" value="NM_211721.1"/>
</dbReference>
<dbReference type="SMR" id="Q750L0"/>
<dbReference type="FunCoup" id="Q750L0">
    <property type="interactions" value="37"/>
</dbReference>
<dbReference type="STRING" id="284811.Q750L0"/>
<dbReference type="EnsemblFungi" id="AAS54483">
    <property type="protein sequence ID" value="AAS54483"/>
    <property type="gene ID" value="AGOS_AGL007W"/>
</dbReference>
<dbReference type="GeneID" id="4622958"/>
<dbReference type="KEGG" id="ago:AGOS_AGL007W"/>
<dbReference type="eggNOG" id="ENOG502QVB0">
    <property type="taxonomic scope" value="Eukaryota"/>
</dbReference>
<dbReference type="HOGENOM" id="CLU_457135_0_0_1"/>
<dbReference type="InParanoid" id="Q750L0"/>
<dbReference type="OMA" id="TWTTCYN"/>
<dbReference type="OrthoDB" id="185373at2759"/>
<dbReference type="Proteomes" id="UP000000591">
    <property type="component" value="Chromosome VII"/>
</dbReference>
<dbReference type="GO" id="GO:0005743">
    <property type="term" value="C:mitochondrial inner membrane"/>
    <property type="evidence" value="ECO:0007669"/>
    <property type="project" value="UniProtKB-SubCell"/>
</dbReference>
<dbReference type="Gene3D" id="1.25.40.10">
    <property type="entry name" value="Tetratricopeptide repeat domain"/>
    <property type="match status" value="2"/>
</dbReference>
<dbReference type="InterPro" id="IPR011990">
    <property type="entry name" value="TPR-like_helical_dom_sf"/>
</dbReference>
<dbReference type="PANTHER" id="PTHR47938:SF35">
    <property type="entry name" value="PENTATRICOPEPTIDE REPEAT-CONTAINING PROTEIN 4, MITOCHONDRIAL-RELATED"/>
    <property type="match status" value="1"/>
</dbReference>
<dbReference type="PANTHER" id="PTHR47938">
    <property type="entry name" value="RESPIRATORY COMPLEX I CHAPERONE (CIA84), PUTATIVE (AFU_ORTHOLOGUE AFUA_2G06020)-RELATED"/>
    <property type="match status" value="1"/>
</dbReference>
<feature type="chain" id="PRO_0000064463" description="ATPase expression protein 3">
    <location>
        <begin position="1"/>
        <end position="536"/>
    </location>
</feature>
<feature type="repeat" description="PPR 1">
    <location>
        <begin position="212"/>
        <end position="246"/>
    </location>
</feature>
<feature type="repeat" description="PPR 2">
    <location>
        <begin position="386"/>
        <end position="421"/>
    </location>
</feature>
<gene>
    <name type="primary">AEP3</name>
    <name type="ordered locus">AGL007W</name>
</gene>
<protein>
    <recommendedName>
        <fullName>ATPase expression protein 3</fullName>
    </recommendedName>
</protein>
<comment type="function">
    <text evidence="1">Required for respiration.</text>
</comment>
<comment type="subcellular location">
    <subcellularLocation>
        <location evidence="1">Mitochondrion inner membrane</location>
        <topology evidence="1">Peripheral membrane protein</topology>
        <orientation evidence="1">Matrix side</orientation>
    </subcellularLocation>
</comment>
<evidence type="ECO:0000250" key="1"/>
<organism>
    <name type="scientific">Eremothecium gossypii (strain ATCC 10895 / CBS 109.51 / FGSC 9923 / NRRL Y-1056)</name>
    <name type="common">Yeast</name>
    <name type="synonym">Ashbya gossypii</name>
    <dbReference type="NCBI Taxonomy" id="284811"/>
    <lineage>
        <taxon>Eukaryota</taxon>
        <taxon>Fungi</taxon>
        <taxon>Dikarya</taxon>
        <taxon>Ascomycota</taxon>
        <taxon>Saccharomycotina</taxon>
        <taxon>Saccharomycetes</taxon>
        <taxon>Saccharomycetales</taxon>
        <taxon>Saccharomycetaceae</taxon>
        <taxon>Eremothecium</taxon>
    </lineage>
</organism>
<keyword id="KW-0472">Membrane</keyword>
<keyword id="KW-0496">Mitochondrion</keyword>
<keyword id="KW-0999">Mitochondrion inner membrane</keyword>
<keyword id="KW-1185">Reference proteome</keyword>
<keyword id="KW-0677">Repeat</keyword>
<accession>Q750L0</accession>
<name>AEP3_EREGS</name>
<reference key="1">
    <citation type="journal article" date="2004" name="Science">
        <title>The Ashbya gossypii genome as a tool for mapping the ancient Saccharomyces cerevisiae genome.</title>
        <authorList>
            <person name="Dietrich F.S."/>
            <person name="Voegeli S."/>
            <person name="Brachat S."/>
            <person name="Lerch A."/>
            <person name="Gates K."/>
            <person name="Steiner S."/>
            <person name="Mohr C."/>
            <person name="Poehlmann R."/>
            <person name="Luedi P."/>
            <person name="Choi S."/>
            <person name="Wing R.A."/>
            <person name="Flavier A."/>
            <person name="Gaffney T.D."/>
            <person name="Philippsen P."/>
        </authorList>
    </citation>
    <scope>NUCLEOTIDE SEQUENCE [LARGE SCALE GENOMIC DNA]</scope>
    <source>
        <strain>ATCC 10895 / CBS 109.51 / FGSC 9923 / NRRL Y-1056</strain>
    </source>
</reference>
<reference key="2">
    <citation type="journal article" date="2013" name="G3 (Bethesda)">
        <title>Genomes of Ashbya fungi isolated from insects reveal four mating-type loci, numerous translocations, lack of transposons, and distinct gene duplications.</title>
        <authorList>
            <person name="Dietrich F.S."/>
            <person name="Voegeli S."/>
            <person name="Kuo S."/>
            <person name="Philippsen P."/>
        </authorList>
    </citation>
    <scope>GENOME REANNOTATION</scope>
    <source>
        <strain>ATCC 10895 / CBS 109.51 / FGSC 9923 / NRRL Y-1056</strain>
    </source>
</reference>